<accession>Q48VB6</accession>
<protein>
    <recommendedName>
        <fullName evidence="1">Elongation factor G</fullName>
        <shortName evidence="1">EF-G</shortName>
    </recommendedName>
</protein>
<dbReference type="EMBL" id="CP000056">
    <property type="protein sequence ID" value="AAX71340.1"/>
    <property type="molecule type" value="Genomic_DNA"/>
</dbReference>
<dbReference type="RefSeq" id="WP_002986045.1">
    <property type="nucleotide sequence ID" value="NC_007296.2"/>
</dbReference>
<dbReference type="SMR" id="Q48VB6"/>
<dbReference type="GeneID" id="69900199"/>
<dbReference type="KEGG" id="spb:M28_Spy0226"/>
<dbReference type="HOGENOM" id="CLU_002794_4_1_9"/>
<dbReference type="GO" id="GO:0005737">
    <property type="term" value="C:cytoplasm"/>
    <property type="evidence" value="ECO:0007669"/>
    <property type="project" value="UniProtKB-SubCell"/>
</dbReference>
<dbReference type="GO" id="GO:0005525">
    <property type="term" value="F:GTP binding"/>
    <property type="evidence" value="ECO:0007669"/>
    <property type="project" value="UniProtKB-UniRule"/>
</dbReference>
<dbReference type="GO" id="GO:0003924">
    <property type="term" value="F:GTPase activity"/>
    <property type="evidence" value="ECO:0007669"/>
    <property type="project" value="InterPro"/>
</dbReference>
<dbReference type="GO" id="GO:0003746">
    <property type="term" value="F:translation elongation factor activity"/>
    <property type="evidence" value="ECO:0007669"/>
    <property type="project" value="UniProtKB-UniRule"/>
</dbReference>
<dbReference type="GO" id="GO:0032790">
    <property type="term" value="P:ribosome disassembly"/>
    <property type="evidence" value="ECO:0007669"/>
    <property type="project" value="TreeGrafter"/>
</dbReference>
<dbReference type="CDD" id="cd01886">
    <property type="entry name" value="EF-G"/>
    <property type="match status" value="1"/>
</dbReference>
<dbReference type="CDD" id="cd16262">
    <property type="entry name" value="EFG_III"/>
    <property type="match status" value="1"/>
</dbReference>
<dbReference type="CDD" id="cd01434">
    <property type="entry name" value="EFG_mtEFG1_IV"/>
    <property type="match status" value="1"/>
</dbReference>
<dbReference type="CDD" id="cd03713">
    <property type="entry name" value="EFG_mtEFG_C"/>
    <property type="match status" value="1"/>
</dbReference>
<dbReference type="CDD" id="cd04088">
    <property type="entry name" value="EFG_mtEFG_II"/>
    <property type="match status" value="1"/>
</dbReference>
<dbReference type="FunFam" id="2.40.30.10:FF:000006">
    <property type="entry name" value="Elongation factor G"/>
    <property type="match status" value="1"/>
</dbReference>
<dbReference type="FunFam" id="3.30.230.10:FF:000003">
    <property type="entry name" value="Elongation factor G"/>
    <property type="match status" value="1"/>
</dbReference>
<dbReference type="FunFam" id="3.30.70.240:FF:000001">
    <property type="entry name" value="Elongation factor G"/>
    <property type="match status" value="1"/>
</dbReference>
<dbReference type="FunFam" id="3.30.70.870:FF:000001">
    <property type="entry name" value="Elongation factor G"/>
    <property type="match status" value="1"/>
</dbReference>
<dbReference type="FunFam" id="3.40.50.300:FF:000029">
    <property type="entry name" value="Elongation factor G"/>
    <property type="match status" value="1"/>
</dbReference>
<dbReference type="Gene3D" id="3.30.230.10">
    <property type="match status" value="1"/>
</dbReference>
<dbReference type="Gene3D" id="3.30.70.240">
    <property type="match status" value="1"/>
</dbReference>
<dbReference type="Gene3D" id="3.30.70.870">
    <property type="entry name" value="Elongation Factor G (Translational Gtpase), domain 3"/>
    <property type="match status" value="1"/>
</dbReference>
<dbReference type="Gene3D" id="3.40.50.300">
    <property type="entry name" value="P-loop containing nucleotide triphosphate hydrolases"/>
    <property type="match status" value="1"/>
</dbReference>
<dbReference type="Gene3D" id="2.40.30.10">
    <property type="entry name" value="Translation factors"/>
    <property type="match status" value="1"/>
</dbReference>
<dbReference type="HAMAP" id="MF_00054_B">
    <property type="entry name" value="EF_G_EF_2_B"/>
    <property type="match status" value="1"/>
</dbReference>
<dbReference type="InterPro" id="IPR041095">
    <property type="entry name" value="EFG_II"/>
</dbReference>
<dbReference type="InterPro" id="IPR009022">
    <property type="entry name" value="EFG_III"/>
</dbReference>
<dbReference type="InterPro" id="IPR035647">
    <property type="entry name" value="EFG_III/V"/>
</dbReference>
<dbReference type="InterPro" id="IPR047872">
    <property type="entry name" value="EFG_IV"/>
</dbReference>
<dbReference type="InterPro" id="IPR035649">
    <property type="entry name" value="EFG_V"/>
</dbReference>
<dbReference type="InterPro" id="IPR000640">
    <property type="entry name" value="EFG_V-like"/>
</dbReference>
<dbReference type="InterPro" id="IPR004161">
    <property type="entry name" value="EFTu-like_2"/>
</dbReference>
<dbReference type="InterPro" id="IPR031157">
    <property type="entry name" value="G_TR_CS"/>
</dbReference>
<dbReference type="InterPro" id="IPR027417">
    <property type="entry name" value="P-loop_NTPase"/>
</dbReference>
<dbReference type="InterPro" id="IPR020568">
    <property type="entry name" value="Ribosomal_Su5_D2-typ_SF"/>
</dbReference>
<dbReference type="InterPro" id="IPR014721">
    <property type="entry name" value="Ribsml_uS5_D2-typ_fold_subgr"/>
</dbReference>
<dbReference type="InterPro" id="IPR005225">
    <property type="entry name" value="Small_GTP-bd"/>
</dbReference>
<dbReference type="InterPro" id="IPR000795">
    <property type="entry name" value="T_Tr_GTP-bd_dom"/>
</dbReference>
<dbReference type="InterPro" id="IPR009000">
    <property type="entry name" value="Transl_B-barrel_sf"/>
</dbReference>
<dbReference type="InterPro" id="IPR004540">
    <property type="entry name" value="Transl_elong_EFG/EF2"/>
</dbReference>
<dbReference type="InterPro" id="IPR005517">
    <property type="entry name" value="Transl_elong_EFG/EF2_IV"/>
</dbReference>
<dbReference type="NCBIfam" id="TIGR00484">
    <property type="entry name" value="EF-G"/>
    <property type="match status" value="1"/>
</dbReference>
<dbReference type="NCBIfam" id="NF009379">
    <property type="entry name" value="PRK12740.1-3"/>
    <property type="match status" value="1"/>
</dbReference>
<dbReference type="NCBIfam" id="NF009381">
    <property type="entry name" value="PRK12740.1-5"/>
    <property type="match status" value="1"/>
</dbReference>
<dbReference type="NCBIfam" id="TIGR00231">
    <property type="entry name" value="small_GTP"/>
    <property type="match status" value="1"/>
</dbReference>
<dbReference type="PANTHER" id="PTHR43261:SF1">
    <property type="entry name" value="RIBOSOME-RELEASING FACTOR 2, MITOCHONDRIAL"/>
    <property type="match status" value="1"/>
</dbReference>
<dbReference type="PANTHER" id="PTHR43261">
    <property type="entry name" value="TRANSLATION ELONGATION FACTOR G-RELATED"/>
    <property type="match status" value="1"/>
</dbReference>
<dbReference type="Pfam" id="PF00679">
    <property type="entry name" value="EFG_C"/>
    <property type="match status" value="1"/>
</dbReference>
<dbReference type="Pfam" id="PF14492">
    <property type="entry name" value="EFG_III"/>
    <property type="match status" value="1"/>
</dbReference>
<dbReference type="Pfam" id="PF03764">
    <property type="entry name" value="EFG_IV"/>
    <property type="match status" value="1"/>
</dbReference>
<dbReference type="Pfam" id="PF00009">
    <property type="entry name" value="GTP_EFTU"/>
    <property type="match status" value="1"/>
</dbReference>
<dbReference type="Pfam" id="PF03144">
    <property type="entry name" value="GTP_EFTU_D2"/>
    <property type="match status" value="1"/>
</dbReference>
<dbReference type="PRINTS" id="PR00315">
    <property type="entry name" value="ELONGATNFCT"/>
</dbReference>
<dbReference type="SMART" id="SM00838">
    <property type="entry name" value="EFG_C"/>
    <property type="match status" value="1"/>
</dbReference>
<dbReference type="SMART" id="SM00889">
    <property type="entry name" value="EFG_IV"/>
    <property type="match status" value="1"/>
</dbReference>
<dbReference type="SUPFAM" id="SSF54980">
    <property type="entry name" value="EF-G C-terminal domain-like"/>
    <property type="match status" value="2"/>
</dbReference>
<dbReference type="SUPFAM" id="SSF52540">
    <property type="entry name" value="P-loop containing nucleoside triphosphate hydrolases"/>
    <property type="match status" value="1"/>
</dbReference>
<dbReference type="SUPFAM" id="SSF54211">
    <property type="entry name" value="Ribosomal protein S5 domain 2-like"/>
    <property type="match status" value="1"/>
</dbReference>
<dbReference type="SUPFAM" id="SSF50447">
    <property type="entry name" value="Translation proteins"/>
    <property type="match status" value="1"/>
</dbReference>
<dbReference type="PROSITE" id="PS00301">
    <property type="entry name" value="G_TR_1"/>
    <property type="match status" value="1"/>
</dbReference>
<dbReference type="PROSITE" id="PS51722">
    <property type="entry name" value="G_TR_2"/>
    <property type="match status" value="1"/>
</dbReference>
<evidence type="ECO:0000255" key="1">
    <source>
        <dbReference type="HAMAP-Rule" id="MF_00054"/>
    </source>
</evidence>
<reference key="1">
    <citation type="journal article" date="2005" name="J. Infect. Dis.">
        <title>Genome sequence of a serotype M28 strain of group A Streptococcus: potential new insights into puerperal sepsis and bacterial disease specificity.</title>
        <authorList>
            <person name="Green N.M."/>
            <person name="Zhang S."/>
            <person name="Porcella S.F."/>
            <person name="Nagiec M.J."/>
            <person name="Barbian K.D."/>
            <person name="Beres S.B."/>
            <person name="Lefebvre R.B."/>
            <person name="Musser J.M."/>
        </authorList>
    </citation>
    <scope>NUCLEOTIDE SEQUENCE [LARGE SCALE GENOMIC DNA]</scope>
    <source>
        <strain>MGAS6180</strain>
    </source>
</reference>
<feature type="chain" id="PRO_0000225244" description="Elongation factor G">
    <location>
        <begin position="1"/>
        <end position="692"/>
    </location>
</feature>
<feature type="domain" description="tr-type G">
    <location>
        <begin position="8"/>
        <end position="282"/>
    </location>
</feature>
<feature type="binding site" evidence="1">
    <location>
        <begin position="17"/>
        <end position="24"/>
    </location>
    <ligand>
        <name>GTP</name>
        <dbReference type="ChEBI" id="CHEBI:37565"/>
    </ligand>
</feature>
<feature type="binding site" evidence="1">
    <location>
        <begin position="81"/>
        <end position="85"/>
    </location>
    <ligand>
        <name>GTP</name>
        <dbReference type="ChEBI" id="CHEBI:37565"/>
    </ligand>
</feature>
<feature type="binding site" evidence="1">
    <location>
        <begin position="135"/>
        <end position="138"/>
    </location>
    <ligand>
        <name>GTP</name>
        <dbReference type="ChEBI" id="CHEBI:37565"/>
    </ligand>
</feature>
<gene>
    <name evidence="1" type="primary">fusA</name>
    <name type="ordered locus">M28_Spy0226</name>
</gene>
<sequence length="692" mass="76529">MAREFSLAKTRNIGIMAHVDAGKTTTTERILYYTGKIHKIGETHEGASQMDWMEQEQERGITITSAATTAQWDGHRVNIIDTPGHVDFTIEVQRSLRVLDGAVTVLDSQSGVEPQTETVWRQATEYGVPRIVFANKMDKIGADFLYSVQTLHDRLQANAHPIQLPIGAEDDFRGIIDLIKMKAEIYTNDLGTDILEEDIPEEYLEQAQEYREKLIEAVAETDEDLMMKYLEGEEITNDELIAGIRKATINVEFFPVLCGSAFKNKGVQLMLDAVIAYLPSPLDIPAIKGVNPDTDAEEERPASDEEPFAALAFKIMTDPFVGRLTFFRVYSGVLNSGSYVMNTSKGKRERIGRILQMHANSRQEIETVYAGDIAAAVGLKDTTTGDSLTDEKAKVILESIEVPEPVIQLMVEPKSKADQDKMGVALQKLAEEDPTFRVETNVETGETVIAGMGELHLDVLVDRMKREFKVEANVGAPQVSYRETFRASTQARGFFKRQSGGKGQFGDVWIEFTPNEEGKGFEFENAIVGGVVPREFIPAVEKGLIESMANGVLAGYPMVDVKAKLYDGSYHDVDSSETAFKIAASLALKEAAKSAQPAILEPMMLVTITAPEDNLGDVMGHVTARRGRVDGMEAHGNSQIVRAYVPLAEMFGYATVLRSATQGRGTFMMVFDHYEDVPKSVQEEIIKKNKGE</sequence>
<proteinExistence type="inferred from homology"/>
<name>EFG_STRPM</name>
<comment type="function">
    <text evidence="1">Catalyzes the GTP-dependent ribosomal translocation step during translation elongation. During this step, the ribosome changes from the pre-translocational (PRE) to the post-translocational (POST) state as the newly formed A-site-bound peptidyl-tRNA and P-site-bound deacylated tRNA move to the P and E sites, respectively. Catalyzes the coordinated movement of the two tRNA molecules, the mRNA and conformational changes in the ribosome.</text>
</comment>
<comment type="subcellular location">
    <subcellularLocation>
        <location evidence="1">Cytoplasm</location>
    </subcellularLocation>
</comment>
<comment type="similarity">
    <text evidence="1">Belongs to the TRAFAC class translation factor GTPase superfamily. Classic translation factor GTPase family. EF-G/EF-2 subfamily.</text>
</comment>
<keyword id="KW-0963">Cytoplasm</keyword>
<keyword id="KW-0251">Elongation factor</keyword>
<keyword id="KW-0342">GTP-binding</keyword>
<keyword id="KW-0547">Nucleotide-binding</keyword>
<keyword id="KW-0648">Protein biosynthesis</keyword>
<organism>
    <name type="scientific">Streptococcus pyogenes serotype M28 (strain MGAS6180)</name>
    <dbReference type="NCBI Taxonomy" id="319701"/>
    <lineage>
        <taxon>Bacteria</taxon>
        <taxon>Bacillati</taxon>
        <taxon>Bacillota</taxon>
        <taxon>Bacilli</taxon>
        <taxon>Lactobacillales</taxon>
        <taxon>Streptococcaceae</taxon>
        <taxon>Streptococcus</taxon>
    </lineage>
</organism>